<protein>
    <recommendedName>
        <fullName>Chlorophyllide a oxygenase, chloroplastic</fullName>
        <shortName>Chlorophyll a oxygenase</shortName>
        <ecNumber>1.14.13.122</ecNumber>
    </recommendedName>
    <alternativeName>
        <fullName>Chlorophyll b synthase</fullName>
    </alternativeName>
</protein>
<proteinExistence type="evidence at transcript level"/>
<organism>
    <name type="scientific">Chlamydomonas reinhardtii</name>
    <name type="common">Chlamydomonas smithii</name>
    <dbReference type="NCBI Taxonomy" id="3055"/>
    <lineage>
        <taxon>Eukaryota</taxon>
        <taxon>Viridiplantae</taxon>
        <taxon>Chlorophyta</taxon>
        <taxon>core chlorophytes</taxon>
        <taxon>Chlorophyceae</taxon>
        <taxon>CS clade</taxon>
        <taxon>Chlamydomonadales</taxon>
        <taxon>Chlamydomonadaceae</taxon>
        <taxon>Chlamydomonas</taxon>
    </lineage>
</organism>
<gene>
    <name type="primary">CAO</name>
</gene>
<sequence length="645" mass="72106">MLPASLQRKAAAVGGRGPTNQSRVAVRVSAQPKEAPPASTPIVEDPESKFRRYGKHFGGIHKLSMDWLDSVPRVRVRTKDSRQLDDMLELAVLNERLAGRLEPWQARQKLEYLRKRRKNWERIFEYVTRQDAAATLAMIEEANRKVEESLSEEAREKTAVGDLRDQLESLRAQVAQAQERLAMTQSRVEQNLQRVNELKAEATTLERMRKASDLDIKERERIAISTVAAKGPASSSSSAAAVSAPATSATLTVERPAATTVTQEVPSTSYGTPVDRAPRRSKAAIRRSRGLESSMEIEEGLRNFWYPAEFSARLPKDTLVPFELFGEPWVMFRDEKGQPSCIRDECAHRGCPLSLGKVVEGQVMCPYHGWEFNGDGACTKMPSTPFCRNVGVAALPCAEKDGFIWVWPGDGLPAETLPDFAQPPEGFLIHAEIMVDVPVEHGLLIENLLDLAHAPFTHTSTFARGWPVPDFVKFHANKALSGFWDPYPIDMAFQPPCMTLSTIGLAQPGKIMRGVTASQCKNHLHQLHVCMPSKKGHTRLLYRMSLDFLPWMRHVPFIDRIWKQVAAQVLGEDLVLVLGQQDRMLRGGSNWSNPAPYDKLAVRYRRWRNGVNAEVARVRAGEPPSNPVAMSAGEMFSVDEDDMDN</sequence>
<comment type="function">
    <text>Catalyzes a two-step oxygenase reaction involved in the synthesis of chlorophyll b. Acts specifically on the non-esterified chlorophyllide a and not on chlorophyll a.</text>
</comment>
<comment type="catalytic activity">
    <reaction>
        <text>chlorophyllide a + 2 NADPH + 2 O2 + 2 H(+) = chlorophyllide b + 2 NADP(+) + 3 H2O</text>
        <dbReference type="Rhea" id="RHEA:30359"/>
        <dbReference type="ChEBI" id="CHEBI:15377"/>
        <dbReference type="ChEBI" id="CHEBI:15378"/>
        <dbReference type="ChEBI" id="CHEBI:15379"/>
        <dbReference type="ChEBI" id="CHEBI:57783"/>
        <dbReference type="ChEBI" id="CHEBI:58349"/>
        <dbReference type="ChEBI" id="CHEBI:83348"/>
        <dbReference type="ChEBI" id="CHEBI:83356"/>
        <dbReference type="EC" id="1.14.13.122"/>
    </reaction>
</comment>
<comment type="subcellular location">
    <subcellularLocation>
        <location evidence="5">Plastid</location>
        <location evidence="5">Chloroplast inner membrane</location>
        <topology evidence="5">Peripheral membrane protein</topology>
    </subcellularLocation>
    <subcellularLocation>
        <location evidence="5">Plastid</location>
        <location evidence="5">Chloroplast thylakoid membrane</location>
        <topology evidence="5">Peripheral membrane protein</topology>
    </subcellularLocation>
</comment>
<comment type="sequence caution" evidence="6">
    <conflict type="frameshift">
        <sequence resource="EMBL-CDS" id="BAA33964"/>
    </conflict>
</comment>
<dbReference type="EC" id="1.14.13.122"/>
<dbReference type="EMBL" id="AB015139">
    <property type="protein sequence ID" value="BAA33964.1"/>
    <property type="status" value="ALT_FRAME"/>
    <property type="molecule type" value="mRNA"/>
</dbReference>
<dbReference type="EMBL" id="AY860816">
    <property type="protein sequence ID" value="AAX54904.1"/>
    <property type="molecule type" value="mRNA"/>
</dbReference>
<dbReference type="RefSeq" id="XP_001690175.1">
    <property type="nucleotide sequence ID" value="XM_001690123.1"/>
</dbReference>
<dbReference type="SMR" id="Q9ZWM5"/>
<dbReference type="PaxDb" id="3055-EDP09913"/>
<dbReference type="EnsemblPlants" id="PNW88760">
    <property type="protein sequence ID" value="PNW88760"/>
    <property type="gene ID" value="CHLRE_01g043350v5"/>
</dbReference>
<dbReference type="Gramene" id="PNW88760">
    <property type="protein sequence ID" value="PNW88760"/>
    <property type="gene ID" value="CHLRE_01g043350v5"/>
</dbReference>
<dbReference type="KEGG" id="cre:CHLRE_01g043350v5"/>
<dbReference type="eggNOG" id="ENOG502QS20">
    <property type="taxonomic scope" value="Eukaryota"/>
</dbReference>
<dbReference type="HOGENOM" id="CLU_027465_1_0_1"/>
<dbReference type="OMA" id="SGLEGYW"/>
<dbReference type="OrthoDB" id="426882at2759"/>
<dbReference type="BioCyc" id="CHLAMY:GIO2-4469-MONOMER"/>
<dbReference type="BRENDA" id="1.14.13.122">
    <property type="organism ID" value="1318"/>
</dbReference>
<dbReference type="GO" id="GO:0009706">
    <property type="term" value="C:chloroplast inner membrane"/>
    <property type="evidence" value="ECO:0007669"/>
    <property type="project" value="UniProtKB-SubCell"/>
</dbReference>
<dbReference type="GO" id="GO:0009535">
    <property type="term" value="C:chloroplast thylakoid membrane"/>
    <property type="evidence" value="ECO:0007669"/>
    <property type="project" value="UniProtKB-SubCell"/>
</dbReference>
<dbReference type="GO" id="GO:0051537">
    <property type="term" value="F:2 iron, 2 sulfur cluster binding"/>
    <property type="evidence" value="ECO:0007669"/>
    <property type="project" value="UniProtKB-KW"/>
</dbReference>
<dbReference type="GO" id="GO:0010277">
    <property type="term" value="F:chlorophyllide a oxygenase activity"/>
    <property type="evidence" value="ECO:0007669"/>
    <property type="project" value="UniProtKB-EC"/>
</dbReference>
<dbReference type="GO" id="GO:0005506">
    <property type="term" value="F:iron ion binding"/>
    <property type="evidence" value="ECO:0007669"/>
    <property type="project" value="InterPro"/>
</dbReference>
<dbReference type="GO" id="GO:0015995">
    <property type="term" value="P:chlorophyll biosynthetic process"/>
    <property type="evidence" value="ECO:0007669"/>
    <property type="project" value="UniProtKB-KW"/>
</dbReference>
<dbReference type="CDD" id="cd04337">
    <property type="entry name" value="Rieske_RO_Alpha_Cao"/>
    <property type="match status" value="1"/>
</dbReference>
<dbReference type="Gene3D" id="3.90.380.10">
    <property type="entry name" value="Naphthalene 1,2-dioxygenase Alpha Subunit, Chain A, domain 1"/>
    <property type="match status" value="1"/>
</dbReference>
<dbReference type="Gene3D" id="2.102.10.10">
    <property type="entry name" value="Rieske [2Fe-2S] iron-sulphur domain"/>
    <property type="match status" value="1"/>
</dbReference>
<dbReference type="InterPro" id="IPR050584">
    <property type="entry name" value="Cholesterol_7-desaturase"/>
</dbReference>
<dbReference type="InterPro" id="IPR013626">
    <property type="entry name" value="PaO"/>
</dbReference>
<dbReference type="InterPro" id="IPR017941">
    <property type="entry name" value="Rieske_2Fe-2S"/>
</dbReference>
<dbReference type="InterPro" id="IPR036922">
    <property type="entry name" value="Rieske_2Fe-2S_sf"/>
</dbReference>
<dbReference type="InterPro" id="IPR015881">
    <property type="entry name" value="Ring-hydroxy_dOase_2Fe2S_BS"/>
</dbReference>
<dbReference type="PANTHER" id="PTHR21266:SF19">
    <property type="entry name" value="CHLOROPHYLLIDE A OXYGENASE, CHLOROPLASTIC"/>
    <property type="match status" value="1"/>
</dbReference>
<dbReference type="PANTHER" id="PTHR21266">
    <property type="entry name" value="IRON-SULFUR DOMAIN CONTAINING PROTEIN"/>
    <property type="match status" value="1"/>
</dbReference>
<dbReference type="Pfam" id="PF08417">
    <property type="entry name" value="PaO"/>
    <property type="match status" value="1"/>
</dbReference>
<dbReference type="Pfam" id="PF00355">
    <property type="entry name" value="Rieske"/>
    <property type="match status" value="1"/>
</dbReference>
<dbReference type="SUPFAM" id="SSF55961">
    <property type="entry name" value="Bet v1-like"/>
    <property type="match status" value="1"/>
</dbReference>
<dbReference type="SUPFAM" id="SSF50022">
    <property type="entry name" value="ISP domain"/>
    <property type="match status" value="1"/>
</dbReference>
<dbReference type="PROSITE" id="PS51296">
    <property type="entry name" value="RIESKE"/>
    <property type="match status" value="1"/>
</dbReference>
<reference key="1">
    <citation type="journal article" date="1998" name="Proc. Natl. Acad. Sci. U.S.A.">
        <title>Chlorophyll a oxygenase (CAO) is involved in chlorophyll b formation from chlorophyll a.</title>
        <authorList>
            <person name="Tanaka A."/>
            <person name="Ito H."/>
            <person name="Tanaka R."/>
            <person name="Tanaka N."/>
            <person name="Yoshida K."/>
            <person name="Okada K."/>
        </authorList>
    </citation>
    <scope>NUCLEOTIDE SEQUENCE [MRNA]</scope>
</reference>
<reference key="2">
    <citation type="journal article" date="2005" name="Plant Physiol.">
        <title>Genome-based examination of chlorophyll and carotenoid biosynthesis in Chlamydomonas reinhardtii.</title>
        <authorList>
            <person name="Lohr M."/>
            <person name="Im C.-S."/>
            <person name="Grossman A.R."/>
        </authorList>
    </citation>
    <scope>NUCLEOTIDE SEQUENCE [MRNA]</scope>
    <source>
        <strain>CC-124</strain>
    </source>
</reference>
<reference key="3">
    <citation type="journal article" date="2004" name="BMC Plant Biol.">
        <title>Synthesis of chlorophyll b: localization of chlorophyllide a oxygenase and discovery of a stable radical in the catalytic subunit.</title>
        <authorList>
            <person name="Eggink L.L."/>
            <person name="LoBrutto R."/>
            <person name="Brune D.C."/>
            <person name="Brusslan J."/>
            <person name="Yamasato A."/>
            <person name="Tanaka A."/>
            <person name="Hoober J.K."/>
        </authorList>
    </citation>
    <scope>SUBCELLULAR LOCATION</scope>
</reference>
<evidence type="ECO:0000250" key="1"/>
<evidence type="ECO:0000255" key="2"/>
<evidence type="ECO:0000255" key="3">
    <source>
        <dbReference type="PROSITE-ProRule" id="PRU00628"/>
    </source>
</evidence>
<evidence type="ECO:0000256" key="4">
    <source>
        <dbReference type="SAM" id="MobiDB-lite"/>
    </source>
</evidence>
<evidence type="ECO:0000269" key="5">
    <source>
    </source>
</evidence>
<evidence type="ECO:0000305" key="6"/>
<name>CAO_CHLRE</name>
<keyword id="KW-0001">2Fe-2S</keyword>
<keyword id="KW-0149">Chlorophyll biosynthesis</keyword>
<keyword id="KW-0150">Chloroplast</keyword>
<keyword id="KW-0175">Coiled coil</keyword>
<keyword id="KW-0408">Iron</keyword>
<keyword id="KW-0411">Iron-sulfur</keyword>
<keyword id="KW-0472">Membrane</keyword>
<keyword id="KW-0479">Metal-binding</keyword>
<keyword id="KW-0521">NADP</keyword>
<keyword id="KW-0560">Oxidoreductase</keyword>
<keyword id="KW-0934">Plastid</keyword>
<keyword id="KW-1001">Plastid inner membrane</keyword>
<keyword id="KW-0793">Thylakoid</keyword>
<keyword id="KW-0809">Transit peptide</keyword>
<feature type="transit peptide" description="Chloroplast" evidence="2">
    <location>
        <begin position="1"/>
        <end status="unknown"/>
    </location>
</feature>
<feature type="chain" id="PRO_0000250166" description="Chlorophyllide a oxygenase, chloroplastic">
    <location>
        <begin status="unknown"/>
        <end position="645"/>
    </location>
</feature>
<feature type="domain" description="Rieske" evidence="3">
    <location>
        <begin position="305"/>
        <end position="406"/>
    </location>
</feature>
<feature type="region of interest" description="Disordered" evidence="4">
    <location>
        <begin position="1"/>
        <end position="46"/>
    </location>
</feature>
<feature type="region of interest" description="Disordered" evidence="4">
    <location>
        <begin position="258"/>
        <end position="287"/>
    </location>
</feature>
<feature type="coiled-coil region" evidence="2">
    <location>
        <begin position="105"/>
        <end position="218"/>
    </location>
</feature>
<feature type="compositionally biased region" description="Polar residues" evidence="4">
    <location>
        <begin position="259"/>
        <end position="271"/>
    </location>
</feature>
<feature type="binding site" evidence="3">
    <location>
        <position position="346"/>
    </location>
    <ligand>
        <name>[2Fe-2S] cluster</name>
        <dbReference type="ChEBI" id="CHEBI:190135"/>
    </ligand>
</feature>
<feature type="binding site" evidence="3">
    <location>
        <position position="348"/>
    </location>
    <ligand>
        <name>[2Fe-2S] cluster</name>
        <dbReference type="ChEBI" id="CHEBI:190135"/>
    </ligand>
</feature>
<feature type="binding site" evidence="3">
    <location>
        <position position="365"/>
    </location>
    <ligand>
        <name>[2Fe-2S] cluster</name>
        <dbReference type="ChEBI" id="CHEBI:190135"/>
    </ligand>
</feature>
<feature type="binding site" evidence="3">
    <location>
        <position position="368"/>
    </location>
    <ligand>
        <name>[2Fe-2S] cluster</name>
        <dbReference type="ChEBI" id="CHEBI:190135"/>
    </ligand>
</feature>
<feature type="binding site" evidence="1">
    <location>
        <position position="446"/>
    </location>
    <ligand>
        <name>Fe cation</name>
        <dbReference type="ChEBI" id="CHEBI:24875"/>
    </ligand>
</feature>
<feature type="binding site" evidence="1">
    <location>
        <position position="450"/>
    </location>
    <ligand>
        <name>Fe cation</name>
        <dbReference type="ChEBI" id="CHEBI:24875"/>
    </ligand>
</feature>
<feature type="binding site" evidence="1">
    <location>
        <position position="453"/>
    </location>
    <ligand>
        <name>Fe cation</name>
        <dbReference type="ChEBI" id="CHEBI:24875"/>
    </ligand>
</feature>
<feature type="binding site" evidence="1">
    <location>
        <position position="458"/>
    </location>
    <ligand>
        <name>Fe cation</name>
        <dbReference type="ChEBI" id="CHEBI:24875"/>
    </ligand>
</feature>
<feature type="sequence conflict" description="In Ref. 1; BAA33964." evidence="6" ref="1">
    <original>C</original>
    <variation>Y</variation>
    <location>
        <position position="341"/>
    </location>
</feature>
<accession>Q9ZWM5</accession>
<accession>Q4VKB8</accession>